<dbReference type="EMBL" id="CP001348">
    <property type="protein sequence ID" value="ACL75151.1"/>
    <property type="molecule type" value="Genomic_DNA"/>
</dbReference>
<dbReference type="RefSeq" id="WP_015924316.1">
    <property type="nucleotide sequence ID" value="NC_011898.1"/>
</dbReference>
<dbReference type="SMR" id="B8I7Z4"/>
<dbReference type="STRING" id="394503.Ccel_0773"/>
<dbReference type="KEGG" id="cce:Ccel_0773"/>
<dbReference type="eggNOG" id="COG0097">
    <property type="taxonomic scope" value="Bacteria"/>
</dbReference>
<dbReference type="HOGENOM" id="CLU_065464_1_2_9"/>
<dbReference type="OrthoDB" id="9805007at2"/>
<dbReference type="Proteomes" id="UP000001349">
    <property type="component" value="Chromosome"/>
</dbReference>
<dbReference type="GO" id="GO:0022625">
    <property type="term" value="C:cytosolic large ribosomal subunit"/>
    <property type="evidence" value="ECO:0007669"/>
    <property type="project" value="TreeGrafter"/>
</dbReference>
<dbReference type="GO" id="GO:0019843">
    <property type="term" value="F:rRNA binding"/>
    <property type="evidence" value="ECO:0007669"/>
    <property type="project" value="UniProtKB-UniRule"/>
</dbReference>
<dbReference type="GO" id="GO:0003735">
    <property type="term" value="F:structural constituent of ribosome"/>
    <property type="evidence" value="ECO:0007669"/>
    <property type="project" value="InterPro"/>
</dbReference>
<dbReference type="GO" id="GO:0002181">
    <property type="term" value="P:cytoplasmic translation"/>
    <property type="evidence" value="ECO:0007669"/>
    <property type="project" value="TreeGrafter"/>
</dbReference>
<dbReference type="FunFam" id="3.90.930.12:FF:000001">
    <property type="entry name" value="50S ribosomal protein L6"/>
    <property type="match status" value="1"/>
</dbReference>
<dbReference type="FunFam" id="3.90.930.12:FF:000002">
    <property type="entry name" value="50S ribosomal protein L6"/>
    <property type="match status" value="1"/>
</dbReference>
<dbReference type="Gene3D" id="3.90.930.12">
    <property type="entry name" value="Ribosomal protein L6, alpha-beta domain"/>
    <property type="match status" value="2"/>
</dbReference>
<dbReference type="HAMAP" id="MF_01365_B">
    <property type="entry name" value="Ribosomal_uL6_B"/>
    <property type="match status" value="1"/>
</dbReference>
<dbReference type="InterPro" id="IPR000702">
    <property type="entry name" value="Ribosomal_uL6-like"/>
</dbReference>
<dbReference type="InterPro" id="IPR036789">
    <property type="entry name" value="Ribosomal_uL6-like_a/b-dom_sf"/>
</dbReference>
<dbReference type="InterPro" id="IPR020040">
    <property type="entry name" value="Ribosomal_uL6_a/b-dom"/>
</dbReference>
<dbReference type="InterPro" id="IPR019906">
    <property type="entry name" value="Ribosomal_uL6_bac-type"/>
</dbReference>
<dbReference type="InterPro" id="IPR002358">
    <property type="entry name" value="Ribosomal_uL6_CS"/>
</dbReference>
<dbReference type="NCBIfam" id="TIGR03654">
    <property type="entry name" value="L6_bact"/>
    <property type="match status" value="1"/>
</dbReference>
<dbReference type="PANTHER" id="PTHR11655">
    <property type="entry name" value="60S/50S RIBOSOMAL PROTEIN L6/L9"/>
    <property type="match status" value="1"/>
</dbReference>
<dbReference type="PANTHER" id="PTHR11655:SF14">
    <property type="entry name" value="LARGE RIBOSOMAL SUBUNIT PROTEIN UL6M"/>
    <property type="match status" value="1"/>
</dbReference>
<dbReference type="Pfam" id="PF00347">
    <property type="entry name" value="Ribosomal_L6"/>
    <property type="match status" value="2"/>
</dbReference>
<dbReference type="PIRSF" id="PIRSF002162">
    <property type="entry name" value="Ribosomal_L6"/>
    <property type="match status" value="1"/>
</dbReference>
<dbReference type="PRINTS" id="PR00059">
    <property type="entry name" value="RIBOSOMALL6"/>
</dbReference>
<dbReference type="SUPFAM" id="SSF56053">
    <property type="entry name" value="Ribosomal protein L6"/>
    <property type="match status" value="2"/>
</dbReference>
<dbReference type="PROSITE" id="PS00525">
    <property type="entry name" value="RIBOSOMAL_L6_1"/>
    <property type="match status" value="1"/>
</dbReference>
<gene>
    <name evidence="1" type="primary">rplF</name>
    <name type="ordered locus">Ccel_0773</name>
</gene>
<sequence>MSRIGKLPITVPKGVTVKLEGDNLLTVKGTKGTLSKKFNKDMIIKVEADQIVVQRPSDLKIYKSLHGLTRTLINNMVEGVTNGFQKTLEINGVGYRAQKQGKKLVLTLGYSHPVEMEDPEGIATEVPAPNKIIVKGIDKQVVGEVAAKIREKRLPEPYKGKGIKYETEVIRRKEGKTGGKGKK</sequence>
<organism>
    <name type="scientific">Ruminiclostridium cellulolyticum (strain ATCC 35319 / DSM 5812 / JCM 6584 / H10)</name>
    <name type="common">Clostridium cellulolyticum</name>
    <dbReference type="NCBI Taxonomy" id="394503"/>
    <lineage>
        <taxon>Bacteria</taxon>
        <taxon>Bacillati</taxon>
        <taxon>Bacillota</taxon>
        <taxon>Clostridia</taxon>
        <taxon>Eubacteriales</taxon>
        <taxon>Oscillospiraceae</taxon>
        <taxon>Ruminiclostridium</taxon>
    </lineage>
</organism>
<name>RL6_RUMCH</name>
<reference key="1">
    <citation type="submission" date="2009-01" db="EMBL/GenBank/DDBJ databases">
        <title>Complete sequence of Clostridium cellulolyticum H10.</title>
        <authorList>
            <consortium name="US DOE Joint Genome Institute"/>
            <person name="Lucas S."/>
            <person name="Copeland A."/>
            <person name="Lapidus A."/>
            <person name="Glavina del Rio T."/>
            <person name="Dalin E."/>
            <person name="Tice H."/>
            <person name="Bruce D."/>
            <person name="Goodwin L."/>
            <person name="Pitluck S."/>
            <person name="Chertkov O."/>
            <person name="Saunders E."/>
            <person name="Brettin T."/>
            <person name="Detter J.C."/>
            <person name="Han C."/>
            <person name="Larimer F."/>
            <person name="Land M."/>
            <person name="Hauser L."/>
            <person name="Kyrpides N."/>
            <person name="Ivanova N."/>
            <person name="Zhou J."/>
            <person name="Richardson P."/>
        </authorList>
    </citation>
    <scope>NUCLEOTIDE SEQUENCE [LARGE SCALE GENOMIC DNA]</scope>
    <source>
        <strain>ATCC 35319 / DSM 5812 / JCM 6584 / H10</strain>
    </source>
</reference>
<evidence type="ECO:0000255" key="1">
    <source>
        <dbReference type="HAMAP-Rule" id="MF_01365"/>
    </source>
</evidence>
<evidence type="ECO:0000305" key="2"/>
<comment type="function">
    <text evidence="1">This protein binds to the 23S rRNA, and is important in its secondary structure. It is located near the subunit interface in the base of the L7/L12 stalk, and near the tRNA binding site of the peptidyltransferase center.</text>
</comment>
<comment type="subunit">
    <text evidence="1">Part of the 50S ribosomal subunit.</text>
</comment>
<comment type="similarity">
    <text evidence="1">Belongs to the universal ribosomal protein uL6 family.</text>
</comment>
<feature type="chain" id="PRO_1000166800" description="Large ribosomal subunit protein uL6">
    <location>
        <begin position="1"/>
        <end position="183"/>
    </location>
</feature>
<protein>
    <recommendedName>
        <fullName evidence="1">Large ribosomal subunit protein uL6</fullName>
    </recommendedName>
    <alternativeName>
        <fullName evidence="2">50S ribosomal protein L6</fullName>
    </alternativeName>
</protein>
<accession>B8I7Z4</accession>
<proteinExistence type="inferred from homology"/>
<keyword id="KW-1185">Reference proteome</keyword>
<keyword id="KW-0687">Ribonucleoprotein</keyword>
<keyword id="KW-0689">Ribosomal protein</keyword>
<keyword id="KW-0694">RNA-binding</keyword>
<keyword id="KW-0699">rRNA-binding</keyword>